<proteinExistence type="inferred from homology"/>
<gene>
    <name evidence="1" type="primary">gpmA</name>
    <name type="ordered locus">MGAS9429_Spy1212</name>
</gene>
<evidence type="ECO:0000255" key="1">
    <source>
        <dbReference type="HAMAP-Rule" id="MF_01039"/>
    </source>
</evidence>
<keyword id="KW-0312">Gluconeogenesis</keyword>
<keyword id="KW-0324">Glycolysis</keyword>
<keyword id="KW-0413">Isomerase</keyword>
<protein>
    <recommendedName>
        <fullName evidence="1">2,3-bisphosphoglycerate-dependent phosphoglycerate mutase</fullName>
        <shortName evidence="1">BPG-dependent PGAM</shortName>
        <shortName evidence="1">PGAM</shortName>
        <shortName evidence="1">Phosphoglyceromutase</shortName>
        <shortName evidence="1">dPGM</shortName>
        <ecNumber evidence="1">5.4.2.11</ecNumber>
    </recommendedName>
</protein>
<comment type="function">
    <text evidence="1">Catalyzes the interconversion of 2-phosphoglycerate and 3-phosphoglycerate.</text>
</comment>
<comment type="catalytic activity">
    <reaction evidence="1">
        <text>(2R)-2-phosphoglycerate = (2R)-3-phosphoglycerate</text>
        <dbReference type="Rhea" id="RHEA:15901"/>
        <dbReference type="ChEBI" id="CHEBI:58272"/>
        <dbReference type="ChEBI" id="CHEBI:58289"/>
        <dbReference type="EC" id="5.4.2.11"/>
    </reaction>
</comment>
<comment type="pathway">
    <text evidence="1">Carbohydrate degradation; glycolysis; pyruvate from D-glyceraldehyde 3-phosphate: step 3/5.</text>
</comment>
<comment type="similarity">
    <text evidence="1">Belongs to the phosphoglycerate mutase family. BPG-dependent PGAM subfamily.</text>
</comment>
<feature type="chain" id="PRO_1000064106" description="2,3-bisphosphoglycerate-dependent phosphoglycerate mutase">
    <location>
        <begin position="1"/>
        <end position="231"/>
    </location>
</feature>
<feature type="active site" description="Tele-phosphohistidine intermediate" evidence="1">
    <location>
        <position position="9"/>
    </location>
</feature>
<feature type="active site" description="Proton donor/acceptor" evidence="1">
    <location>
        <position position="87"/>
    </location>
</feature>
<feature type="binding site" evidence="1">
    <location>
        <begin position="8"/>
        <end position="15"/>
    </location>
    <ligand>
        <name>substrate</name>
    </ligand>
</feature>
<feature type="binding site" evidence="1">
    <location>
        <begin position="21"/>
        <end position="22"/>
    </location>
    <ligand>
        <name>substrate</name>
    </ligand>
</feature>
<feature type="binding site" evidence="1">
    <location>
        <position position="60"/>
    </location>
    <ligand>
        <name>substrate</name>
    </ligand>
</feature>
<feature type="binding site" evidence="1">
    <location>
        <begin position="87"/>
        <end position="90"/>
    </location>
    <ligand>
        <name>substrate</name>
    </ligand>
</feature>
<feature type="binding site" evidence="1">
    <location>
        <position position="98"/>
    </location>
    <ligand>
        <name>substrate</name>
    </ligand>
</feature>
<feature type="binding site" evidence="1">
    <location>
        <begin position="114"/>
        <end position="115"/>
    </location>
    <ligand>
        <name>substrate</name>
    </ligand>
</feature>
<feature type="binding site" evidence="1">
    <location>
        <begin position="183"/>
        <end position="184"/>
    </location>
    <ligand>
        <name>substrate</name>
    </ligand>
</feature>
<feature type="site" description="Transition state stabilizer" evidence="1">
    <location>
        <position position="182"/>
    </location>
</feature>
<name>GPMA_STRPC</name>
<reference key="1">
    <citation type="journal article" date="2006" name="Proc. Natl. Acad. Sci. U.S.A.">
        <title>Molecular genetic anatomy of inter- and intraserotype variation in the human bacterial pathogen group A Streptococcus.</title>
        <authorList>
            <person name="Beres S.B."/>
            <person name="Richter E.W."/>
            <person name="Nagiec M.J."/>
            <person name="Sumby P."/>
            <person name="Porcella S.F."/>
            <person name="DeLeo F.R."/>
            <person name="Musser J.M."/>
        </authorList>
    </citation>
    <scope>NUCLEOTIDE SEQUENCE [LARGE SCALE GENOMIC DNA]</scope>
    <source>
        <strain>MGAS9429</strain>
    </source>
</reference>
<sequence>MVKLVFARHGESEWNKANLFTGWADVDLSEKGTQQAIDAGKLIKEAGIEFDLAFTSVLTRAIKTTNLALENAGQLWVPTEKSWRLNERHYGALTGKNKAEAAEQFGDEQVHIWRRSYDVLPPAMAKDDEYSAHKDRRYADLDPALIPDAENLKVTLERAMPYWEEKIAPALLDGKNVFVGAHGNSIRALVKHIKGLSDDEIMDVEIPNFPPLVFELDEKLNIVKEYYLGGE</sequence>
<organism>
    <name type="scientific">Streptococcus pyogenes serotype M12 (strain MGAS9429)</name>
    <dbReference type="NCBI Taxonomy" id="370551"/>
    <lineage>
        <taxon>Bacteria</taxon>
        <taxon>Bacillati</taxon>
        <taxon>Bacillota</taxon>
        <taxon>Bacilli</taxon>
        <taxon>Lactobacillales</taxon>
        <taxon>Streptococcaceae</taxon>
        <taxon>Streptococcus</taxon>
    </lineage>
</organism>
<dbReference type="EC" id="5.4.2.11" evidence="1"/>
<dbReference type="EMBL" id="CP000259">
    <property type="protein sequence ID" value="ABF32399.1"/>
    <property type="molecule type" value="Genomic_DNA"/>
</dbReference>
<dbReference type="RefSeq" id="WP_002983928.1">
    <property type="nucleotide sequence ID" value="NC_008021.1"/>
</dbReference>
<dbReference type="SMR" id="Q1JL20"/>
<dbReference type="KEGG" id="spk:MGAS9429_Spy1212"/>
<dbReference type="HOGENOM" id="CLU_033323_1_5_9"/>
<dbReference type="UniPathway" id="UPA00109">
    <property type="reaction ID" value="UER00186"/>
</dbReference>
<dbReference type="Proteomes" id="UP000002433">
    <property type="component" value="Chromosome"/>
</dbReference>
<dbReference type="GO" id="GO:0004619">
    <property type="term" value="F:phosphoglycerate mutase activity"/>
    <property type="evidence" value="ECO:0007669"/>
    <property type="project" value="UniProtKB-EC"/>
</dbReference>
<dbReference type="GO" id="GO:0006094">
    <property type="term" value="P:gluconeogenesis"/>
    <property type="evidence" value="ECO:0007669"/>
    <property type="project" value="UniProtKB-UniRule"/>
</dbReference>
<dbReference type="GO" id="GO:0006096">
    <property type="term" value="P:glycolytic process"/>
    <property type="evidence" value="ECO:0007669"/>
    <property type="project" value="UniProtKB-UniRule"/>
</dbReference>
<dbReference type="CDD" id="cd07067">
    <property type="entry name" value="HP_PGM_like"/>
    <property type="match status" value="1"/>
</dbReference>
<dbReference type="FunFam" id="3.40.50.1240:FF:000003">
    <property type="entry name" value="2,3-bisphosphoglycerate-dependent phosphoglycerate mutase"/>
    <property type="match status" value="1"/>
</dbReference>
<dbReference type="Gene3D" id="3.40.50.1240">
    <property type="entry name" value="Phosphoglycerate mutase-like"/>
    <property type="match status" value="1"/>
</dbReference>
<dbReference type="HAMAP" id="MF_01039">
    <property type="entry name" value="PGAM_GpmA"/>
    <property type="match status" value="1"/>
</dbReference>
<dbReference type="InterPro" id="IPR013078">
    <property type="entry name" value="His_Pase_superF_clade-1"/>
</dbReference>
<dbReference type="InterPro" id="IPR029033">
    <property type="entry name" value="His_PPase_superfam"/>
</dbReference>
<dbReference type="InterPro" id="IPR005952">
    <property type="entry name" value="Phosphogly_mut1"/>
</dbReference>
<dbReference type="NCBIfam" id="TIGR01258">
    <property type="entry name" value="pgm_1"/>
    <property type="match status" value="1"/>
</dbReference>
<dbReference type="NCBIfam" id="NF010713">
    <property type="entry name" value="PRK14115.1"/>
    <property type="match status" value="1"/>
</dbReference>
<dbReference type="NCBIfam" id="NF010715">
    <property type="entry name" value="PRK14117.1"/>
    <property type="match status" value="1"/>
</dbReference>
<dbReference type="PANTHER" id="PTHR11931">
    <property type="entry name" value="PHOSPHOGLYCERATE MUTASE"/>
    <property type="match status" value="1"/>
</dbReference>
<dbReference type="Pfam" id="PF00300">
    <property type="entry name" value="His_Phos_1"/>
    <property type="match status" value="1"/>
</dbReference>
<dbReference type="PIRSF" id="PIRSF000709">
    <property type="entry name" value="6PFK_2-Ptase"/>
    <property type="match status" value="1"/>
</dbReference>
<dbReference type="SMART" id="SM00855">
    <property type="entry name" value="PGAM"/>
    <property type="match status" value="1"/>
</dbReference>
<dbReference type="SUPFAM" id="SSF53254">
    <property type="entry name" value="Phosphoglycerate mutase-like"/>
    <property type="match status" value="1"/>
</dbReference>
<accession>Q1JL20</accession>